<organism>
    <name type="scientific">Saccharopolyspora erythraea (strain ATCC 11635 / DSM 40517 / JCM 4748 / NBRC 13426 / NCIMB 8594 / NRRL 2338)</name>
    <dbReference type="NCBI Taxonomy" id="405948"/>
    <lineage>
        <taxon>Bacteria</taxon>
        <taxon>Bacillati</taxon>
        <taxon>Actinomycetota</taxon>
        <taxon>Actinomycetes</taxon>
        <taxon>Pseudonocardiales</taxon>
        <taxon>Pseudonocardiaceae</taxon>
        <taxon>Saccharopolyspora</taxon>
    </lineage>
</organism>
<sequence>MPLDQSFIGREYPPTPAYEVGREKIREFAEAIKDRSPLHRDPEAAKAAGYPDVIAPPTFAVLLSMKAHDAIVEDPQLGLDYSRVVHGQQEFAHHRPIQAGDRLRTVVHVDDIKARAGNDFLTVRAEITTVEGEPVCTAKSTLVARGTAEDPEGEDA</sequence>
<proteinExistence type="inferred from homology"/>
<feature type="chain" id="PRO_1000046972" description="UPF0336 protein SACE_6876">
    <location>
        <begin position="1"/>
        <end position="156"/>
    </location>
</feature>
<feature type="domain" description="MaoC-like">
    <location>
        <begin position="8"/>
        <end position="128"/>
    </location>
</feature>
<protein>
    <recommendedName>
        <fullName evidence="1">UPF0336 protein SACE_6876</fullName>
    </recommendedName>
</protein>
<reference key="1">
    <citation type="journal article" date="2007" name="Nat. Biotechnol.">
        <title>Complete genome sequence of the erythromycin-producing bacterium Saccharopolyspora erythraea NRRL23338.</title>
        <authorList>
            <person name="Oliynyk M."/>
            <person name="Samborskyy M."/>
            <person name="Lester J.B."/>
            <person name="Mironenko T."/>
            <person name="Scott N."/>
            <person name="Dickens S."/>
            <person name="Haydock S.F."/>
            <person name="Leadlay P.F."/>
        </authorList>
    </citation>
    <scope>NUCLEOTIDE SEQUENCE [LARGE SCALE GENOMIC DNA]</scope>
    <source>
        <strain>ATCC 11635 / DSM 40517 / JCM 4748 / NBRC 13426 / NCIMB 8594 / NRRL 2338</strain>
    </source>
</reference>
<comment type="similarity">
    <text evidence="1">Belongs to the UPF0336 family.</text>
</comment>
<evidence type="ECO:0000255" key="1">
    <source>
        <dbReference type="HAMAP-Rule" id="MF_00799"/>
    </source>
</evidence>
<gene>
    <name type="ordered locus">SACE_6876</name>
</gene>
<keyword id="KW-1185">Reference proteome</keyword>
<name>Y6876_SACEN</name>
<dbReference type="EMBL" id="AM420293">
    <property type="protein sequence ID" value="CAM06040.1"/>
    <property type="molecule type" value="Genomic_DNA"/>
</dbReference>
<dbReference type="RefSeq" id="WP_009944080.1">
    <property type="nucleotide sequence ID" value="NC_009142.1"/>
</dbReference>
<dbReference type="SMR" id="A4FPR5"/>
<dbReference type="STRING" id="405948.SACE_6876"/>
<dbReference type="KEGG" id="sen:SACE_6876"/>
<dbReference type="eggNOG" id="COG2030">
    <property type="taxonomic scope" value="Bacteria"/>
</dbReference>
<dbReference type="HOGENOM" id="CLU_116276_0_0_11"/>
<dbReference type="OrthoDB" id="5415111at2"/>
<dbReference type="Proteomes" id="UP000006728">
    <property type="component" value="Chromosome"/>
</dbReference>
<dbReference type="GO" id="GO:0019171">
    <property type="term" value="F:(3R)-hydroxyacyl-[acyl-carrier-protein] dehydratase activity"/>
    <property type="evidence" value="ECO:0007669"/>
    <property type="project" value="TreeGrafter"/>
</dbReference>
<dbReference type="GO" id="GO:0006633">
    <property type="term" value="P:fatty acid biosynthetic process"/>
    <property type="evidence" value="ECO:0007669"/>
    <property type="project" value="TreeGrafter"/>
</dbReference>
<dbReference type="CDD" id="cd03441">
    <property type="entry name" value="R_hydratase_like"/>
    <property type="match status" value="1"/>
</dbReference>
<dbReference type="Gene3D" id="3.10.129.10">
    <property type="entry name" value="Hotdog Thioesterase"/>
    <property type="match status" value="1"/>
</dbReference>
<dbReference type="HAMAP" id="MF_00799">
    <property type="entry name" value="UPF0336"/>
    <property type="match status" value="1"/>
</dbReference>
<dbReference type="InterPro" id="IPR039569">
    <property type="entry name" value="FAS1-like_DH_region"/>
</dbReference>
<dbReference type="InterPro" id="IPR016709">
    <property type="entry name" value="HadA-like"/>
</dbReference>
<dbReference type="InterPro" id="IPR029069">
    <property type="entry name" value="HotDog_dom_sf"/>
</dbReference>
<dbReference type="InterPro" id="IPR050965">
    <property type="entry name" value="UPF0336/Enoyl-CoA_hydratase"/>
</dbReference>
<dbReference type="PANTHER" id="PTHR43437:SF3">
    <property type="entry name" value="HYDROXYACYL-THIOESTER DEHYDRATASE TYPE 2, MITOCHONDRIAL"/>
    <property type="match status" value="1"/>
</dbReference>
<dbReference type="PANTHER" id="PTHR43437">
    <property type="entry name" value="HYDROXYACYL-THIOESTER DEHYDRATASE TYPE 2, MITOCHONDRIAL-RELATED"/>
    <property type="match status" value="1"/>
</dbReference>
<dbReference type="Pfam" id="PF13452">
    <property type="entry name" value="FAS1_DH_region"/>
    <property type="match status" value="1"/>
</dbReference>
<dbReference type="PIRSF" id="PIRSF018072">
    <property type="entry name" value="UCP018072"/>
    <property type="match status" value="1"/>
</dbReference>
<dbReference type="SUPFAM" id="SSF54637">
    <property type="entry name" value="Thioesterase/thiol ester dehydrase-isomerase"/>
    <property type="match status" value="1"/>
</dbReference>
<accession>A4FPR5</accession>